<protein>
    <recommendedName>
        <fullName evidence="1">Protein NrdI</fullName>
    </recommendedName>
</protein>
<feature type="chain" id="PRO_1000016491" description="Protein NrdI">
    <location>
        <begin position="1"/>
        <end position="130"/>
    </location>
</feature>
<gene>
    <name evidence="1" type="primary">nrdI</name>
    <name type="ordered locus">BARBAKC583_0355</name>
</gene>
<sequence>MGLIVYYSSATGNTEHFVSQLGQRFFKIDKKISSALVYEPYVLVVPTYADGEGRKAVPKPVIHFLNEVENRKLMRGVIGGGNRNFGRNYSLASKIIAEKCSVPCLYNFELRGTDEDVICVKKGLEKFWKQ</sequence>
<comment type="function">
    <text evidence="1">Probably involved in ribonucleotide reductase function.</text>
</comment>
<comment type="similarity">
    <text evidence="1">Belongs to the NrdI family.</text>
</comment>
<reference key="1">
    <citation type="submission" date="2006-12" db="EMBL/GenBank/DDBJ databases">
        <authorList>
            <person name="Hendrix L."/>
            <person name="Mohamoud Y."/>
            <person name="Radune D."/>
            <person name="Shvartsbeyn A."/>
            <person name="Daugherty S."/>
            <person name="Dodson R."/>
            <person name="Durkin A.S."/>
            <person name="Harkins D."/>
            <person name="Huot H."/>
            <person name="Kothari S.P."/>
            <person name="Madupu R."/>
            <person name="Li J."/>
            <person name="Nelson W.C."/>
            <person name="Shrivastava S."/>
            <person name="Giglio M.G."/>
            <person name="Haft D."/>
            <person name="Selengut J."/>
            <person name="Fraser-Ligget C."/>
            <person name="Seshadri R."/>
        </authorList>
    </citation>
    <scope>NUCLEOTIDE SEQUENCE [LARGE SCALE GENOMIC DNA]</scope>
    <source>
        <strain>ATCC 35685 / KC583 / Herrer 020/F12,63</strain>
    </source>
</reference>
<organism>
    <name type="scientific">Bartonella bacilliformis (strain ATCC 35685 / KC583 / Herrer 020/F12,63)</name>
    <dbReference type="NCBI Taxonomy" id="360095"/>
    <lineage>
        <taxon>Bacteria</taxon>
        <taxon>Pseudomonadati</taxon>
        <taxon>Pseudomonadota</taxon>
        <taxon>Alphaproteobacteria</taxon>
        <taxon>Hyphomicrobiales</taxon>
        <taxon>Bartonellaceae</taxon>
        <taxon>Bartonella</taxon>
    </lineage>
</organism>
<evidence type="ECO:0000255" key="1">
    <source>
        <dbReference type="HAMAP-Rule" id="MF_00128"/>
    </source>
</evidence>
<accession>A1URS1</accession>
<proteinExistence type="inferred from homology"/>
<dbReference type="EMBL" id="CP000524">
    <property type="protein sequence ID" value="ABM45037.1"/>
    <property type="molecule type" value="Genomic_DNA"/>
</dbReference>
<dbReference type="RefSeq" id="WP_005766309.1">
    <property type="nucleotide sequence ID" value="NC_008783.1"/>
</dbReference>
<dbReference type="SMR" id="A1URS1"/>
<dbReference type="STRING" id="360095.BARBAKC583_0355"/>
<dbReference type="GeneID" id="4684468"/>
<dbReference type="KEGG" id="bbk:BARBAKC583_0355"/>
<dbReference type="PATRIC" id="fig|360095.6.peg.338"/>
<dbReference type="eggNOG" id="COG1780">
    <property type="taxonomic scope" value="Bacteria"/>
</dbReference>
<dbReference type="HOGENOM" id="CLU_114845_0_0_5"/>
<dbReference type="OrthoDB" id="350535at2"/>
<dbReference type="Proteomes" id="UP000000643">
    <property type="component" value="Chromosome"/>
</dbReference>
<dbReference type="GO" id="GO:0010181">
    <property type="term" value="F:FMN binding"/>
    <property type="evidence" value="ECO:0007669"/>
    <property type="project" value="InterPro"/>
</dbReference>
<dbReference type="GO" id="GO:0036211">
    <property type="term" value="P:protein modification process"/>
    <property type="evidence" value="ECO:0007669"/>
    <property type="project" value="InterPro"/>
</dbReference>
<dbReference type="Gene3D" id="3.40.50.360">
    <property type="match status" value="1"/>
</dbReference>
<dbReference type="HAMAP" id="MF_00128">
    <property type="entry name" value="NrdI"/>
    <property type="match status" value="1"/>
</dbReference>
<dbReference type="InterPro" id="IPR029039">
    <property type="entry name" value="Flavoprotein-like_sf"/>
</dbReference>
<dbReference type="InterPro" id="IPR020852">
    <property type="entry name" value="RNR_Ib_NrdI_bac"/>
</dbReference>
<dbReference type="InterPro" id="IPR004465">
    <property type="entry name" value="RNR_NrdI"/>
</dbReference>
<dbReference type="NCBIfam" id="TIGR00333">
    <property type="entry name" value="nrdI"/>
    <property type="match status" value="1"/>
</dbReference>
<dbReference type="PANTHER" id="PTHR37297">
    <property type="entry name" value="PROTEIN NRDI"/>
    <property type="match status" value="1"/>
</dbReference>
<dbReference type="PANTHER" id="PTHR37297:SF1">
    <property type="entry name" value="PROTEIN NRDI"/>
    <property type="match status" value="1"/>
</dbReference>
<dbReference type="Pfam" id="PF07972">
    <property type="entry name" value="Flavodoxin_NdrI"/>
    <property type="match status" value="1"/>
</dbReference>
<dbReference type="PIRSF" id="PIRSF005087">
    <property type="entry name" value="NrdI"/>
    <property type="match status" value="1"/>
</dbReference>
<dbReference type="SUPFAM" id="SSF52218">
    <property type="entry name" value="Flavoproteins"/>
    <property type="match status" value="1"/>
</dbReference>
<name>NRDI_BARBK</name>